<proteinExistence type="inferred from homology"/>
<sequence length="340" mass="36214">MKLAVIGGDGIGPEVTDEALKVLRALRADIETTDLDLGARRYLRNGELLTDEDLALLREHDAILLGAIGAPGSVPPGVLERGLLLKLRFALDHHVNLRPSKLYEGVESPLKNPGEIDFVVVREGTEGAYTGNGGAIRVGTPHETANETSVNTRYGAERVIRYAFELAQSRRRHLTLVHKTNVLVHGGGLWQRTVDEVAREYPEVTVDYNHIDAATIYLVTDPSRFDVIVTDNLFGDILTDEAGAISGGIGLAASGNIDATGTNPSMFEPVHGSAPDIMGKGIADPTAAILSAAMMLRHLGDEANAVRIEEAVARDVAGRDPEAPISTTEVGDRIAAAVVA</sequence>
<evidence type="ECO:0000255" key="1">
    <source>
        <dbReference type="HAMAP-Rule" id="MF_01035"/>
    </source>
</evidence>
<evidence type="ECO:0000305" key="2"/>
<accession>Q8FPV5</accession>
<organism>
    <name type="scientific">Corynebacterium efficiens (strain DSM 44549 / YS-314 / AJ 12310 / JCM 11189 / NBRC 100395)</name>
    <dbReference type="NCBI Taxonomy" id="196164"/>
    <lineage>
        <taxon>Bacteria</taxon>
        <taxon>Bacillati</taxon>
        <taxon>Actinomycetota</taxon>
        <taxon>Actinomycetes</taxon>
        <taxon>Mycobacteriales</taxon>
        <taxon>Corynebacteriaceae</taxon>
        <taxon>Corynebacterium</taxon>
    </lineage>
</organism>
<reference key="1">
    <citation type="journal article" date="2003" name="Genome Res.">
        <title>Comparative complete genome sequence analysis of the amino acid replacements responsible for the thermostability of Corynebacterium efficiens.</title>
        <authorList>
            <person name="Nishio Y."/>
            <person name="Nakamura Y."/>
            <person name="Kawarabayasi Y."/>
            <person name="Usuda Y."/>
            <person name="Kimura E."/>
            <person name="Sugimoto S."/>
            <person name="Matsui K."/>
            <person name="Yamagishi A."/>
            <person name="Kikuchi H."/>
            <person name="Ikeo K."/>
            <person name="Gojobori T."/>
        </authorList>
    </citation>
    <scope>NUCLEOTIDE SEQUENCE [LARGE SCALE GENOMIC DNA]</scope>
    <source>
        <strain>DSM 44549 / YS-314 / AJ 12310 / JCM 11189 / NBRC 100395</strain>
    </source>
</reference>
<name>LEU3_COREF</name>
<protein>
    <recommendedName>
        <fullName evidence="1">3-isopropylmalate dehydrogenase</fullName>
        <ecNumber evidence="1">1.1.1.85</ecNumber>
    </recommendedName>
    <alternativeName>
        <fullName evidence="1">3-IPM-DH</fullName>
    </alternativeName>
    <alternativeName>
        <fullName evidence="1">Beta-IPM dehydrogenase</fullName>
        <shortName evidence="1">IMDH</shortName>
    </alternativeName>
</protein>
<feature type="chain" id="PRO_0000083796" description="3-isopropylmalate dehydrogenase">
    <location>
        <begin position="1"/>
        <end position="340"/>
    </location>
</feature>
<feature type="binding site" evidence="1">
    <location>
        <position position="88"/>
    </location>
    <ligand>
        <name>substrate</name>
    </ligand>
</feature>
<feature type="binding site" evidence="1">
    <location>
        <position position="98"/>
    </location>
    <ligand>
        <name>substrate</name>
    </ligand>
</feature>
<feature type="binding site" evidence="1">
    <location>
        <position position="122"/>
    </location>
    <ligand>
        <name>substrate</name>
    </ligand>
</feature>
<feature type="binding site" evidence="1">
    <location>
        <position position="212"/>
    </location>
    <ligand>
        <name>Mg(2+)</name>
        <dbReference type="ChEBI" id="CHEBI:18420"/>
    </ligand>
</feature>
<feature type="binding site" evidence="1">
    <location>
        <position position="212"/>
    </location>
    <ligand>
        <name>substrate</name>
    </ligand>
</feature>
<feature type="binding site" evidence="1">
    <location>
        <position position="236"/>
    </location>
    <ligand>
        <name>Mg(2+)</name>
        <dbReference type="ChEBI" id="CHEBI:18420"/>
    </ligand>
</feature>
<feature type="binding site" evidence="1">
    <location>
        <position position="240"/>
    </location>
    <ligand>
        <name>Mg(2+)</name>
        <dbReference type="ChEBI" id="CHEBI:18420"/>
    </ligand>
</feature>
<feature type="binding site" evidence="1">
    <location>
        <begin position="272"/>
        <end position="284"/>
    </location>
    <ligand>
        <name>NAD(+)</name>
        <dbReference type="ChEBI" id="CHEBI:57540"/>
    </ligand>
</feature>
<feature type="site" description="Important for catalysis" evidence="1">
    <location>
        <position position="129"/>
    </location>
</feature>
<feature type="site" description="Important for catalysis" evidence="1">
    <location>
        <position position="179"/>
    </location>
</feature>
<keyword id="KW-0028">Amino-acid biosynthesis</keyword>
<keyword id="KW-0100">Branched-chain amino acid biosynthesis</keyword>
<keyword id="KW-0963">Cytoplasm</keyword>
<keyword id="KW-0432">Leucine biosynthesis</keyword>
<keyword id="KW-0460">Magnesium</keyword>
<keyword id="KW-0464">Manganese</keyword>
<keyword id="KW-0479">Metal-binding</keyword>
<keyword id="KW-0520">NAD</keyword>
<keyword id="KW-0560">Oxidoreductase</keyword>
<keyword id="KW-1185">Reference proteome</keyword>
<dbReference type="EC" id="1.1.1.85" evidence="1"/>
<dbReference type="EMBL" id="BA000035">
    <property type="protein sequence ID" value="BAC18193.1"/>
    <property type="status" value="ALT_INIT"/>
    <property type="molecule type" value="Genomic_DNA"/>
</dbReference>
<dbReference type="RefSeq" id="WP_035109511.1">
    <property type="nucleotide sequence ID" value="NC_004369.1"/>
</dbReference>
<dbReference type="SMR" id="Q8FPV5"/>
<dbReference type="STRING" id="196164.gene:10741792"/>
<dbReference type="KEGG" id="cef:CE1383"/>
<dbReference type="eggNOG" id="COG0473">
    <property type="taxonomic scope" value="Bacteria"/>
</dbReference>
<dbReference type="HOGENOM" id="CLU_031953_0_1_11"/>
<dbReference type="OrthoDB" id="5289857at2"/>
<dbReference type="UniPathway" id="UPA00048">
    <property type="reaction ID" value="UER00072"/>
</dbReference>
<dbReference type="Proteomes" id="UP000001409">
    <property type="component" value="Chromosome"/>
</dbReference>
<dbReference type="GO" id="GO:0005737">
    <property type="term" value="C:cytoplasm"/>
    <property type="evidence" value="ECO:0007669"/>
    <property type="project" value="UniProtKB-SubCell"/>
</dbReference>
<dbReference type="GO" id="GO:0003862">
    <property type="term" value="F:3-isopropylmalate dehydrogenase activity"/>
    <property type="evidence" value="ECO:0007669"/>
    <property type="project" value="UniProtKB-UniRule"/>
</dbReference>
<dbReference type="GO" id="GO:0000287">
    <property type="term" value="F:magnesium ion binding"/>
    <property type="evidence" value="ECO:0007669"/>
    <property type="project" value="InterPro"/>
</dbReference>
<dbReference type="GO" id="GO:0051287">
    <property type="term" value="F:NAD binding"/>
    <property type="evidence" value="ECO:0007669"/>
    <property type="project" value="InterPro"/>
</dbReference>
<dbReference type="GO" id="GO:0009098">
    <property type="term" value="P:L-leucine biosynthetic process"/>
    <property type="evidence" value="ECO:0007669"/>
    <property type="project" value="UniProtKB-UniRule"/>
</dbReference>
<dbReference type="Gene3D" id="3.40.718.10">
    <property type="entry name" value="Isopropylmalate Dehydrogenase"/>
    <property type="match status" value="1"/>
</dbReference>
<dbReference type="HAMAP" id="MF_01035">
    <property type="entry name" value="LeuB_type2"/>
    <property type="match status" value="1"/>
</dbReference>
<dbReference type="InterPro" id="IPR050501">
    <property type="entry name" value="ICDH/IPMDH"/>
</dbReference>
<dbReference type="InterPro" id="IPR019818">
    <property type="entry name" value="IsoCit/isopropylmalate_DH_CS"/>
</dbReference>
<dbReference type="InterPro" id="IPR024084">
    <property type="entry name" value="IsoPropMal-DH-like_dom"/>
</dbReference>
<dbReference type="InterPro" id="IPR023698">
    <property type="entry name" value="LeuB_actb"/>
</dbReference>
<dbReference type="NCBIfam" id="NF002898">
    <property type="entry name" value="PRK03437.1"/>
    <property type="match status" value="1"/>
</dbReference>
<dbReference type="PANTHER" id="PTHR43275">
    <property type="entry name" value="D-MALATE DEHYDROGENASE [DECARBOXYLATING]"/>
    <property type="match status" value="1"/>
</dbReference>
<dbReference type="PANTHER" id="PTHR43275:SF1">
    <property type="entry name" value="D-MALATE DEHYDROGENASE [DECARBOXYLATING]"/>
    <property type="match status" value="1"/>
</dbReference>
<dbReference type="Pfam" id="PF00180">
    <property type="entry name" value="Iso_dh"/>
    <property type="match status" value="1"/>
</dbReference>
<dbReference type="SMART" id="SM01329">
    <property type="entry name" value="Iso_dh"/>
    <property type="match status" value="1"/>
</dbReference>
<dbReference type="SUPFAM" id="SSF53659">
    <property type="entry name" value="Isocitrate/Isopropylmalate dehydrogenase-like"/>
    <property type="match status" value="1"/>
</dbReference>
<dbReference type="PROSITE" id="PS00470">
    <property type="entry name" value="IDH_IMDH"/>
    <property type="match status" value="1"/>
</dbReference>
<gene>
    <name evidence="1" type="primary">leuB</name>
    <name type="ordered locus">CE1383</name>
</gene>
<comment type="function">
    <text evidence="1">Catalyzes the oxidation of 3-carboxy-2-hydroxy-4-methylpentanoate (3-isopropylmalate) to 3-carboxy-4-methyl-2-oxopentanoate. The product decarboxylates to 4-methyl-2 oxopentanoate.</text>
</comment>
<comment type="catalytic activity">
    <reaction evidence="1">
        <text>(2R,3S)-3-isopropylmalate + NAD(+) = 4-methyl-2-oxopentanoate + CO2 + NADH</text>
        <dbReference type="Rhea" id="RHEA:32271"/>
        <dbReference type="ChEBI" id="CHEBI:16526"/>
        <dbReference type="ChEBI" id="CHEBI:17865"/>
        <dbReference type="ChEBI" id="CHEBI:35121"/>
        <dbReference type="ChEBI" id="CHEBI:57540"/>
        <dbReference type="ChEBI" id="CHEBI:57945"/>
        <dbReference type="EC" id="1.1.1.85"/>
    </reaction>
</comment>
<comment type="cofactor">
    <cofactor evidence="1">
        <name>Mg(2+)</name>
        <dbReference type="ChEBI" id="CHEBI:18420"/>
    </cofactor>
    <cofactor evidence="1">
        <name>Mn(2+)</name>
        <dbReference type="ChEBI" id="CHEBI:29035"/>
    </cofactor>
    <text evidence="1">Binds 1 Mg(2+) or Mn(2+) ion per subunit.</text>
</comment>
<comment type="pathway">
    <text evidence="1">Amino-acid biosynthesis; L-leucine biosynthesis; L-leucine from 3-methyl-2-oxobutanoate: step 3/4.</text>
</comment>
<comment type="subunit">
    <text evidence="1">Homodimer.</text>
</comment>
<comment type="subcellular location">
    <subcellularLocation>
        <location evidence="1">Cytoplasm</location>
    </subcellularLocation>
</comment>
<comment type="similarity">
    <text evidence="1">Belongs to the isocitrate and isopropylmalate dehydrogenases family. LeuB type 2 subfamily.</text>
</comment>
<comment type="sequence caution" evidence="2">
    <conflict type="erroneous initiation">
        <sequence resource="EMBL-CDS" id="BAC18193"/>
    </conflict>
</comment>